<comment type="function">
    <text>Probably plays a regulatory role in sperm development. May participate in regulation of fibrous sheath (FS) assembly by supporting the formation of disulfide bonds during sperm tail morphogenesis. May also be required to rectify incorrect disulfide pairing and generate suitable pairs between the FS constituents. Can reduce disulfide bonds in vitro in the presence of NADP and thioredoxin reductase.</text>
</comment>
<comment type="interaction">
    <interactant intactId="EBI-1220595">
        <id>Q86VQ3</id>
    </interactant>
    <interactant intactId="EBI-742651">
        <id>P35638</id>
        <label>DDIT3</label>
    </interactant>
    <organismsDiffer>false</organismsDiffer>
    <experiments>3</experiments>
</comment>
<comment type="subcellular location">
    <subcellularLocation>
        <location evidence="5">Cytoplasm</location>
    </subcellularLocation>
    <text>In ejaculated spermatozoa, it localizes in the caudal region of the head to the end of the principal piece.</text>
</comment>
<comment type="alternative products">
    <event type="alternative splicing"/>
    <isoform>
        <id>Q86VQ3-1</id>
        <name>1</name>
        <sequence type="displayed"/>
    </isoform>
    <isoform>
        <id>Q86VQ3-2</id>
        <name>2</name>
        <sequence type="described" ref="VSP_014328"/>
    </isoform>
    <isoform>
        <id>Q86VQ3-3</id>
        <name>3</name>
        <sequence type="described" ref="VSP_053684"/>
    </isoform>
</comment>
<comment type="tissue specificity">
    <text evidence="5">Testis-specific. Only expressed during spermiogenesis, prominently in round and elongating spermatids.</text>
</comment>
<proteinExistence type="evidence at protein level"/>
<keyword id="KW-0025">Alternative splicing</keyword>
<keyword id="KW-0963">Cytoplasm</keyword>
<keyword id="KW-0217">Developmental protein</keyword>
<keyword id="KW-0221">Differentiation</keyword>
<keyword id="KW-1015">Disulfide bond</keyword>
<keyword id="KW-0597">Phosphoprotein</keyword>
<keyword id="KW-1267">Proteomics identification</keyword>
<keyword id="KW-0676">Redox-active center</keyword>
<keyword id="KW-1185">Reference proteome</keyword>
<keyword id="KW-0677">Repeat</keyword>
<keyword id="KW-0744">Spermatogenesis</keyword>
<dbReference type="EMBL" id="AF080095">
    <property type="protein sequence ID" value="AAK94950.1"/>
    <property type="molecule type" value="mRNA"/>
</dbReference>
<dbReference type="EMBL" id="EF560747">
    <property type="protein sequence ID" value="ABQ59057.1"/>
    <property type="molecule type" value="mRNA"/>
</dbReference>
<dbReference type="EMBL" id="AK097656">
    <property type="protein sequence ID" value="BAC05133.1"/>
    <property type="molecule type" value="mRNA"/>
</dbReference>
<dbReference type="EMBL" id="AC006238">
    <property type="status" value="NOT_ANNOTATED_CDS"/>
    <property type="molecule type" value="Genomic_DNA"/>
</dbReference>
<dbReference type="EMBL" id="BC050132">
    <property type="protein sequence ID" value="AAH50132.1"/>
    <property type="molecule type" value="mRNA"/>
</dbReference>
<dbReference type="EMBL" id="AL136742">
    <property type="protein sequence ID" value="CAB66676.2"/>
    <property type="molecule type" value="mRNA"/>
</dbReference>
<dbReference type="CCDS" id="CCDS11846.1">
    <molecule id="Q86VQ3-2"/>
</dbReference>
<dbReference type="CCDS" id="CCDS42414.1">
    <molecule id="Q86VQ3-1"/>
</dbReference>
<dbReference type="RefSeq" id="NP_001091999.1">
    <molecule id="Q86VQ3-1"/>
    <property type="nucleotide sequence ID" value="NM_001098529.2"/>
</dbReference>
<dbReference type="RefSeq" id="NP_115619.4">
    <molecule id="Q86VQ3-2"/>
    <property type="nucleotide sequence ID" value="NM_032243.5"/>
</dbReference>
<dbReference type="RefSeq" id="XP_016881530.1">
    <property type="nucleotide sequence ID" value="XM_017026041.1"/>
</dbReference>
<dbReference type="SMR" id="Q86VQ3"/>
<dbReference type="BioGRID" id="123944">
    <property type="interactions" value="17"/>
</dbReference>
<dbReference type="FunCoup" id="Q86VQ3">
    <property type="interactions" value="75"/>
</dbReference>
<dbReference type="IntAct" id="Q86VQ3">
    <property type="interactions" value="15"/>
</dbReference>
<dbReference type="STRING" id="9606.ENSP00000304908"/>
<dbReference type="iPTMnet" id="Q86VQ3"/>
<dbReference type="PhosphoSitePlus" id="Q86VQ3"/>
<dbReference type="BioMuta" id="TXNDC2"/>
<dbReference type="DMDM" id="313104290"/>
<dbReference type="jPOST" id="Q86VQ3"/>
<dbReference type="MassIVE" id="Q86VQ3"/>
<dbReference type="PaxDb" id="9606-ENSP00000304908"/>
<dbReference type="PeptideAtlas" id="Q86VQ3"/>
<dbReference type="ProteomicsDB" id="70057">
    <molecule id="Q86VQ3-1"/>
</dbReference>
<dbReference type="ProteomicsDB" id="70058">
    <molecule id="Q86VQ3-2"/>
</dbReference>
<dbReference type="Antibodypedia" id="6577">
    <property type="antibodies" value="27 antibodies from 15 providers"/>
</dbReference>
<dbReference type="DNASU" id="84203"/>
<dbReference type="Ensembl" id="ENST00000306084.6">
    <molecule id="Q86VQ3-1"/>
    <property type="protein sequence ID" value="ENSP00000304908.6"/>
    <property type="gene ID" value="ENSG00000168454.13"/>
</dbReference>
<dbReference type="Ensembl" id="ENST00000357775.6">
    <molecule id="Q86VQ3-2"/>
    <property type="protein sequence ID" value="ENSP00000350419.4"/>
    <property type="gene ID" value="ENSG00000168454.13"/>
</dbReference>
<dbReference type="GeneID" id="84203"/>
<dbReference type="KEGG" id="hsa:84203"/>
<dbReference type="MANE-Select" id="ENST00000357775.6">
    <molecule id="Q86VQ3-2"/>
    <property type="protein sequence ID" value="ENSP00000350419.4"/>
    <property type="RefSeq nucleotide sequence ID" value="NM_032243.6"/>
    <property type="RefSeq protein sequence ID" value="NP_115619.4"/>
</dbReference>
<dbReference type="UCSC" id="uc002koh.5">
    <molecule id="Q86VQ3-1"/>
    <property type="organism name" value="human"/>
</dbReference>
<dbReference type="AGR" id="HGNC:16470"/>
<dbReference type="CTD" id="84203"/>
<dbReference type="DisGeNET" id="84203"/>
<dbReference type="GeneCards" id="TXNDC2"/>
<dbReference type="HGNC" id="HGNC:16470">
    <property type="gene designation" value="TXNDC2"/>
</dbReference>
<dbReference type="HPA" id="ENSG00000168454">
    <property type="expression patterns" value="Tissue enriched (testis)"/>
</dbReference>
<dbReference type="MIM" id="617790">
    <property type="type" value="gene"/>
</dbReference>
<dbReference type="neXtProt" id="NX_Q86VQ3"/>
<dbReference type="OpenTargets" id="ENSG00000168454"/>
<dbReference type="PharmGKB" id="PA38147"/>
<dbReference type="VEuPathDB" id="HostDB:ENSG00000168454"/>
<dbReference type="eggNOG" id="KOG0907">
    <property type="taxonomic scope" value="Eukaryota"/>
</dbReference>
<dbReference type="GeneTree" id="ENSGT00940000163147"/>
<dbReference type="HOGENOM" id="CLU_045129_0_0_1"/>
<dbReference type="InParanoid" id="Q86VQ3"/>
<dbReference type="OrthoDB" id="2121326at2759"/>
<dbReference type="PAN-GO" id="Q86VQ3">
    <property type="GO annotations" value="0 GO annotations based on evolutionary models"/>
</dbReference>
<dbReference type="PhylomeDB" id="Q86VQ3"/>
<dbReference type="TreeFam" id="TF106377"/>
<dbReference type="PathwayCommons" id="Q86VQ3"/>
<dbReference type="SignaLink" id="Q86VQ3"/>
<dbReference type="BioGRID-ORCS" id="84203">
    <property type="hits" value="10 hits in 1143 CRISPR screens"/>
</dbReference>
<dbReference type="GeneWiki" id="TXNDC2"/>
<dbReference type="GenomeRNAi" id="84203"/>
<dbReference type="Pharos" id="Q86VQ3">
    <property type="development level" value="Tbio"/>
</dbReference>
<dbReference type="PRO" id="PR:Q86VQ3"/>
<dbReference type="Proteomes" id="UP000005640">
    <property type="component" value="Chromosome 18"/>
</dbReference>
<dbReference type="RNAct" id="Q86VQ3">
    <property type="molecule type" value="protein"/>
</dbReference>
<dbReference type="Bgee" id="ENSG00000168454">
    <property type="expression patterns" value="Expressed in left testis and 89 other cell types or tissues"/>
</dbReference>
<dbReference type="ExpressionAtlas" id="Q86VQ3">
    <property type="expression patterns" value="baseline and differential"/>
</dbReference>
<dbReference type="GO" id="GO:0005737">
    <property type="term" value="C:cytoplasm"/>
    <property type="evidence" value="ECO:0000314"/>
    <property type="project" value="UniProtKB"/>
</dbReference>
<dbReference type="GO" id="GO:0004791">
    <property type="term" value="F:thioredoxin-disulfide reductase (NADPH) activity"/>
    <property type="evidence" value="ECO:0000314"/>
    <property type="project" value="UniProtKB"/>
</dbReference>
<dbReference type="GO" id="GO:0030154">
    <property type="term" value="P:cell differentiation"/>
    <property type="evidence" value="ECO:0007669"/>
    <property type="project" value="UniProtKB-KW"/>
</dbReference>
<dbReference type="GO" id="GO:0045454">
    <property type="term" value="P:cell redox homeostasis"/>
    <property type="evidence" value="ECO:0000303"/>
    <property type="project" value="UniProtKB"/>
</dbReference>
<dbReference type="GO" id="GO:0007283">
    <property type="term" value="P:spermatogenesis"/>
    <property type="evidence" value="ECO:0000303"/>
    <property type="project" value="UniProtKB"/>
</dbReference>
<dbReference type="CDD" id="cd02947">
    <property type="entry name" value="TRX_family"/>
    <property type="match status" value="1"/>
</dbReference>
<dbReference type="FunFam" id="3.40.30.10:FF:000224">
    <property type="entry name" value="Thioredoxin domain containing 2 (Spermatozoa)"/>
    <property type="match status" value="1"/>
</dbReference>
<dbReference type="Gene3D" id="3.40.30.10">
    <property type="entry name" value="Glutaredoxin"/>
    <property type="match status" value="1"/>
</dbReference>
<dbReference type="InterPro" id="IPR036249">
    <property type="entry name" value="Thioredoxin-like_sf"/>
</dbReference>
<dbReference type="InterPro" id="IPR013766">
    <property type="entry name" value="Thioredoxin_domain"/>
</dbReference>
<dbReference type="PANTHER" id="PTHR46115">
    <property type="entry name" value="THIOREDOXIN-LIKE PROTEIN 1"/>
    <property type="match status" value="1"/>
</dbReference>
<dbReference type="Pfam" id="PF00085">
    <property type="entry name" value="Thioredoxin"/>
    <property type="match status" value="1"/>
</dbReference>
<dbReference type="SUPFAM" id="SSF52833">
    <property type="entry name" value="Thioredoxin-like"/>
    <property type="match status" value="1"/>
</dbReference>
<dbReference type="PROSITE" id="PS51352">
    <property type="entry name" value="THIOREDOXIN_2"/>
    <property type="match status" value="1"/>
</dbReference>
<name>TXND2_HUMAN</name>
<evidence type="ECO:0000250" key="1">
    <source>
        <dbReference type="UniProtKB" id="Q5XHX6"/>
    </source>
</evidence>
<evidence type="ECO:0000255" key="2">
    <source>
        <dbReference type="PROSITE-ProRule" id="PRU00691"/>
    </source>
</evidence>
<evidence type="ECO:0000256" key="3">
    <source>
        <dbReference type="SAM" id="MobiDB-lite"/>
    </source>
</evidence>
<evidence type="ECO:0000269" key="4">
    <source>
    </source>
</evidence>
<evidence type="ECO:0000269" key="5">
    <source>
    </source>
</evidence>
<evidence type="ECO:0000269" key="6">
    <source>
    </source>
</evidence>
<evidence type="ECO:0000269" key="7">
    <source>
    </source>
</evidence>
<evidence type="ECO:0000269" key="8">
    <source ref="2"/>
</evidence>
<evidence type="ECO:0000303" key="9">
    <source>
    </source>
</evidence>
<evidence type="ECO:0000303" key="10">
    <source>
    </source>
</evidence>
<evidence type="ECO:0000303" key="11">
    <source ref="2"/>
</evidence>
<protein>
    <recommendedName>
        <fullName>Thioredoxin domain-containing protein 2</fullName>
    </recommendedName>
    <alternativeName>
        <fullName>Spermatid-specific thioredoxin-1</fullName>
        <shortName>Sptrx-1</shortName>
    </alternativeName>
</protein>
<sequence length="553" mass="60404">MDVDKELGMESVKAGASGKPEMRLGTQEETSEGDANESSLLVLSSNVPLLALEFLEIAQAKEKAFLPMVSHTFHMRTEESDASQEGDDLPKSSANTSHPKQDDSPKSSEETIQPKEGDIPKAPEETIQSKKEDLPKSSEKAIQPKESNIPKSSAKPIQPKLGNIPKASVKPSQPKEGDIPKAPEETIQSKKEDLPKSSEEAIQPKEGDIPKSSAKPIQPKLGNIAKTSVKPSQPKESDIPKSPEETIQPKEGDIPKSSAKPIQPKLGNIPKASVKPSQPKEGDISKSPEEAIQPKEGDLPKSLEEAIQPKEGDIPKSPEEAIQPKEGDIPKSLEEAIQPKEGDIPKSPEETIQPKKGDIPKSPEEAIQPKEGDIPKSPKQAIQPKEGDIPKSLEEAIPPKEIDIPKSPEETIQPKEDDSPKSLEEATPSKEGDILKPEEETMEFPEGDKVKVILSKEDFEASLKEAGERLVAVDFSATWCGPCRTIRPFFHALSVKHEDVVFLEVDADNCEEVVRECAIMCVPTFQFYKKEEKVDELCGALKEKLEAVIAELK</sequence>
<organism>
    <name type="scientific">Homo sapiens</name>
    <name type="common">Human</name>
    <dbReference type="NCBI Taxonomy" id="9606"/>
    <lineage>
        <taxon>Eukaryota</taxon>
        <taxon>Metazoa</taxon>
        <taxon>Chordata</taxon>
        <taxon>Craniata</taxon>
        <taxon>Vertebrata</taxon>
        <taxon>Euteleostomi</taxon>
        <taxon>Mammalia</taxon>
        <taxon>Eutheria</taxon>
        <taxon>Euarchontoglires</taxon>
        <taxon>Primates</taxon>
        <taxon>Haplorrhini</taxon>
        <taxon>Catarrhini</taxon>
        <taxon>Hominidae</taxon>
        <taxon>Homo</taxon>
    </lineage>
</organism>
<reference key="1">
    <citation type="journal article" date="2001" name="J. Biol. Chem.">
        <title>Characterization of Sptrx, a novel member of the thioredoxin family specifically expressed in human spermatozoa.</title>
        <authorList>
            <person name="Miranda-Vizuete A."/>
            <person name="Ljung J."/>
            <person name="Damdimopoulos A.E."/>
            <person name="Gustafsson J.-A."/>
            <person name="Oko R."/>
            <person name="Pelto-Huikko M."/>
            <person name="Spyrou G."/>
        </authorList>
    </citation>
    <scope>NUCLEOTIDE SEQUENCE [MRNA] (ISOFORM 2)</scope>
    <scope>SUBCELLULAR LOCATION</scope>
    <scope>TISSUE SPECIFICITY</scope>
    <scope>ENZYME ACTIVITY IN VITRO</scope>
</reference>
<reference key="2">
    <citation type="submission" date="2007-04" db="EMBL/GenBank/DDBJ databases">
        <authorList>
            <person name="Schupp I."/>
        </authorList>
    </citation>
    <scope>NUCLEOTIDE SEQUENCE [MRNA] (ISOFORM 3)</scope>
    <scope>VARIANT LYS-341</scope>
</reference>
<reference key="3">
    <citation type="journal article" date="2004" name="Nat. Genet.">
        <title>Complete sequencing and characterization of 21,243 full-length human cDNAs.</title>
        <authorList>
            <person name="Ota T."/>
            <person name="Suzuki Y."/>
            <person name="Nishikawa T."/>
            <person name="Otsuki T."/>
            <person name="Sugiyama T."/>
            <person name="Irie R."/>
            <person name="Wakamatsu A."/>
            <person name="Hayashi K."/>
            <person name="Sato H."/>
            <person name="Nagai K."/>
            <person name="Kimura K."/>
            <person name="Makita H."/>
            <person name="Sekine M."/>
            <person name="Obayashi M."/>
            <person name="Nishi T."/>
            <person name="Shibahara T."/>
            <person name="Tanaka T."/>
            <person name="Ishii S."/>
            <person name="Yamamoto J."/>
            <person name="Saito K."/>
            <person name="Kawai Y."/>
            <person name="Isono Y."/>
            <person name="Nakamura Y."/>
            <person name="Nagahari K."/>
            <person name="Murakami K."/>
            <person name="Yasuda T."/>
            <person name="Iwayanagi T."/>
            <person name="Wagatsuma M."/>
            <person name="Shiratori A."/>
            <person name="Sudo H."/>
            <person name="Hosoiri T."/>
            <person name="Kaku Y."/>
            <person name="Kodaira H."/>
            <person name="Kondo H."/>
            <person name="Sugawara M."/>
            <person name="Takahashi M."/>
            <person name="Kanda K."/>
            <person name="Yokoi T."/>
            <person name="Furuya T."/>
            <person name="Kikkawa E."/>
            <person name="Omura Y."/>
            <person name="Abe K."/>
            <person name="Kamihara K."/>
            <person name="Katsuta N."/>
            <person name="Sato K."/>
            <person name="Tanikawa M."/>
            <person name="Yamazaki M."/>
            <person name="Ninomiya K."/>
            <person name="Ishibashi T."/>
            <person name="Yamashita H."/>
            <person name="Murakawa K."/>
            <person name="Fujimori K."/>
            <person name="Tanai H."/>
            <person name="Kimata M."/>
            <person name="Watanabe M."/>
            <person name="Hiraoka S."/>
            <person name="Chiba Y."/>
            <person name="Ishida S."/>
            <person name="Ono Y."/>
            <person name="Takiguchi S."/>
            <person name="Watanabe S."/>
            <person name="Yosida M."/>
            <person name="Hotuta T."/>
            <person name="Kusano J."/>
            <person name="Kanehori K."/>
            <person name="Takahashi-Fujii A."/>
            <person name="Hara H."/>
            <person name="Tanase T.-O."/>
            <person name="Nomura Y."/>
            <person name="Togiya S."/>
            <person name="Komai F."/>
            <person name="Hara R."/>
            <person name="Takeuchi K."/>
            <person name="Arita M."/>
            <person name="Imose N."/>
            <person name="Musashino K."/>
            <person name="Yuuki H."/>
            <person name="Oshima A."/>
            <person name="Sasaki N."/>
            <person name="Aotsuka S."/>
            <person name="Yoshikawa Y."/>
            <person name="Matsunawa H."/>
            <person name="Ichihara T."/>
            <person name="Shiohata N."/>
            <person name="Sano S."/>
            <person name="Moriya S."/>
            <person name="Momiyama H."/>
            <person name="Satoh N."/>
            <person name="Takami S."/>
            <person name="Terashima Y."/>
            <person name="Suzuki O."/>
            <person name="Nakagawa S."/>
            <person name="Senoh A."/>
            <person name="Mizoguchi H."/>
            <person name="Goto Y."/>
            <person name="Shimizu F."/>
            <person name="Wakebe H."/>
            <person name="Hishigaki H."/>
            <person name="Watanabe T."/>
            <person name="Sugiyama A."/>
            <person name="Takemoto M."/>
            <person name="Kawakami B."/>
            <person name="Yamazaki M."/>
            <person name="Watanabe K."/>
            <person name="Kumagai A."/>
            <person name="Itakura S."/>
            <person name="Fukuzumi Y."/>
            <person name="Fujimori Y."/>
            <person name="Komiyama M."/>
            <person name="Tashiro H."/>
            <person name="Tanigami A."/>
            <person name="Fujiwara T."/>
            <person name="Ono T."/>
            <person name="Yamada K."/>
            <person name="Fujii Y."/>
            <person name="Ozaki K."/>
            <person name="Hirao M."/>
            <person name="Ohmori Y."/>
            <person name="Kawabata A."/>
            <person name="Hikiji T."/>
            <person name="Kobatake N."/>
            <person name="Inagaki H."/>
            <person name="Ikema Y."/>
            <person name="Okamoto S."/>
            <person name="Okitani R."/>
            <person name="Kawakami T."/>
            <person name="Noguchi S."/>
            <person name="Itoh T."/>
            <person name="Shigeta K."/>
            <person name="Senba T."/>
            <person name="Matsumura K."/>
            <person name="Nakajima Y."/>
            <person name="Mizuno T."/>
            <person name="Morinaga M."/>
            <person name="Sasaki M."/>
            <person name="Togashi T."/>
            <person name="Oyama M."/>
            <person name="Hata H."/>
            <person name="Watanabe M."/>
            <person name="Komatsu T."/>
            <person name="Mizushima-Sugano J."/>
            <person name="Satoh T."/>
            <person name="Shirai Y."/>
            <person name="Takahashi Y."/>
            <person name="Nakagawa K."/>
            <person name="Okumura K."/>
            <person name="Nagase T."/>
            <person name="Nomura N."/>
            <person name="Kikuchi H."/>
            <person name="Masuho Y."/>
            <person name="Yamashita R."/>
            <person name="Nakai K."/>
            <person name="Yada T."/>
            <person name="Nakamura Y."/>
            <person name="Ohara O."/>
            <person name="Isogai T."/>
            <person name="Sugano S."/>
        </authorList>
    </citation>
    <scope>NUCLEOTIDE SEQUENCE [LARGE SCALE MRNA] (ISOFORM 1)</scope>
    <scope>VARIANTS LYS-341; ASP-357 AND THR-487</scope>
    <source>
        <tissue>Testis</tissue>
    </source>
</reference>
<reference key="4">
    <citation type="journal article" date="2005" name="Nature">
        <title>DNA sequence and analysis of human chromosome 18.</title>
        <authorList>
            <person name="Nusbaum C."/>
            <person name="Zody M.C."/>
            <person name="Borowsky M.L."/>
            <person name="Kamal M."/>
            <person name="Kodira C.D."/>
            <person name="Taylor T.D."/>
            <person name="Whittaker C.A."/>
            <person name="Chang J.L."/>
            <person name="Cuomo C.A."/>
            <person name="Dewar K."/>
            <person name="FitzGerald M.G."/>
            <person name="Yang X."/>
            <person name="Abouelleil A."/>
            <person name="Allen N.R."/>
            <person name="Anderson S."/>
            <person name="Bloom T."/>
            <person name="Bugalter B."/>
            <person name="Butler J."/>
            <person name="Cook A."/>
            <person name="DeCaprio D."/>
            <person name="Engels R."/>
            <person name="Garber M."/>
            <person name="Gnirke A."/>
            <person name="Hafez N."/>
            <person name="Hall J.L."/>
            <person name="Norman C.H."/>
            <person name="Itoh T."/>
            <person name="Jaffe D.B."/>
            <person name="Kuroki Y."/>
            <person name="Lehoczky J."/>
            <person name="Lui A."/>
            <person name="Macdonald P."/>
            <person name="Mauceli E."/>
            <person name="Mikkelsen T.S."/>
            <person name="Naylor J.W."/>
            <person name="Nicol R."/>
            <person name="Nguyen C."/>
            <person name="Noguchi H."/>
            <person name="O'Leary S.B."/>
            <person name="Piqani B."/>
            <person name="Smith C.L."/>
            <person name="Talamas J.A."/>
            <person name="Topham K."/>
            <person name="Totoki Y."/>
            <person name="Toyoda A."/>
            <person name="Wain H.M."/>
            <person name="Young S.K."/>
            <person name="Zeng Q."/>
            <person name="Zimmer A.R."/>
            <person name="Fujiyama A."/>
            <person name="Hattori M."/>
            <person name="Birren B.W."/>
            <person name="Sakaki Y."/>
            <person name="Lander E.S."/>
        </authorList>
    </citation>
    <scope>NUCLEOTIDE SEQUENCE [LARGE SCALE GENOMIC DNA]</scope>
</reference>
<reference key="5">
    <citation type="journal article" date="2004" name="Genome Res.">
        <title>The status, quality, and expansion of the NIH full-length cDNA project: the Mammalian Gene Collection (MGC).</title>
        <authorList>
            <consortium name="The MGC Project Team"/>
        </authorList>
    </citation>
    <scope>NUCLEOTIDE SEQUENCE [LARGE SCALE MRNA] (ISOFORM 2)</scope>
    <scope>VARIANTS LYS-341 AND ASP-357</scope>
    <source>
        <tissue>Brain</tissue>
    </source>
</reference>
<reference key="6">
    <citation type="journal article" date="2001" name="Genome Res.">
        <title>Towards a catalog of human genes and proteins: sequencing and analysis of 500 novel complete protein coding human cDNAs.</title>
        <authorList>
            <person name="Wiemann S."/>
            <person name="Weil B."/>
            <person name="Wellenreuther R."/>
            <person name="Gassenhuber J."/>
            <person name="Glassl S."/>
            <person name="Ansorge W."/>
            <person name="Boecher M."/>
            <person name="Bloecker H."/>
            <person name="Bauersachs S."/>
            <person name="Blum H."/>
            <person name="Lauber J."/>
            <person name="Duesterhoeft A."/>
            <person name="Beyer A."/>
            <person name="Koehrer K."/>
            <person name="Strack N."/>
            <person name="Mewes H.-W."/>
            <person name="Ottenwaelder B."/>
            <person name="Obermaier B."/>
            <person name="Tampe J."/>
            <person name="Heubner D."/>
            <person name="Wambutt R."/>
            <person name="Korn B."/>
            <person name="Klein M."/>
            <person name="Poustka A."/>
        </authorList>
    </citation>
    <scope>NUCLEOTIDE SEQUENCE [LARGE SCALE MRNA] OF 393-553</scope>
    <scope>VARIANT THR-461</scope>
    <source>
        <tissue>Testis</tissue>
    </source>
</reference>
<reference key="7">
    <citation type="journal article" date="2002" name="FEBS Lett.">
        <title>Human spermatid-specific thioredoxin-1 (Sptrx-1) is a two-domain protein with oxidizing activity.</title>
        <authorList>
            <person name="Jimenez A."/>
            <person name="Johansson C."/>
            <person name="Ljung J."/>
            <person name="Sagemark J."/>
            <person name="Berndt K.D."/>
            <person name="Ren B."/>
            <person name="Tibbelin G."/>
            <person name="Ladenstein R."/>
            <person name="Kieselbach T."/>
            <person name="Holmgren A."/>
            <person name="Gustafsson J.-A."/>
            <person name="Miranda-Vizuete A."/>
        </authorList>
    </citation>
    <scope>ENZYME ACTIVITY IN VITRO</scope>
</reference>
<gene>
    <name type="primary">TXNDC2</name>
    <name type="synonym">SPTRX</name>
    <name type="synonym">SPTRX1</name>
</gene>
<feature type="chain" id="PRO_0000120153" description="Thioredoxin domain-containing protein 2">
    <location>
        <begin position="1"/>
        <end position="553"/>
    </location>
</feature>
<feature type="repeat" description="1">
    <location>
        <begin position="113"/>
        <end position="127"/>
    </location>
</feature>
<feature type="repeat" description="2">
    <location>
        <begin position="128"/>
        <end position="142"/>
    </location>
</feature>
<feature type="repeat" description="3">
    <location>
        <begin position="143"/>
        <end position="157"/>
    </location>
</feature>
<feature type="repeat" description="4">
    <location>
        <begin position="158"/>
        <end position="172"/>
    </location>
</feature>
<feature type="repeat" description="5">
    <location>
        <begin position="173"/>
        <end position="187"/>
    </location>
</feature>
<feature type="repeat" description="6">
    <location>
        <begin position="188"/>
        <end position="202"/>
    </location>
</feature>
<feature type="repeat" description="7">
    <location>
        <begin position="203"/>
        <end position="217"/>
    </location>
</feature>
<feature type="repeat" description="8">
    <location>
        <begin position="218"/>
        <end position="232"/>
    </location>
</feature>
<feature type="repeat" description="9">
    <location>
        <begin position="233"/>
        <end position="247"/>
    </location>
</feature>
<feature type="repeat" description="10">
    <location>
        <begin position="248"/>
        <end position="262"/>
    </location>
</feature>
<feature type="repeat" description="11">
    <location>
        <begin position="263"/>
        <end position="277"/>
    </location>
</feature>
<feature type="repeat" description="12">
    <location>
        <begin position="278"/>
        <end position="292"/>
    </location>
</feature>
<feature type="repeat" description="13">
    <location>
        <begin position="293"/>
        <end position="307"/>
    </location>
</feature>
<feature type="repeat" description="14">
    <location>
        <begin position="308"/>
        <end position="322"/>
    </location>
</feature>
<feature type="repeat" description="15">
    <location>
        <begin position="323"/>
        <end position="337"/>
    </location>
</feature>
<feature type="repeat" description="16">
    <location>
        <begin position="338"/>
        <end position="352"/>
    </location>
</feature>
<feature type="repeat" description="17">
    <location>
        <begin position="353"/>
        <end position="367"/>
    </location>
</feature>
<feature type="repeat" description="18">
    <location>
        <begin position="368"/>
        <end position="382"/>
    </location>
</feature>
<feature type="repeat" description="19">
    <location>
        <begin position="383"/>
        <end position="397"/>
    </location>
</feature>
<feature type="repeat" description="20">
    <location>
        <begin position="398"/>
        <end position="412"/>
    </location>
</feature>
<feature type="repeat" description="21">
    <location>
        <begin position="413"/>
        <end position="427"/>
    </location>
</feature>
<feature type="repeat" description="22">
    <location>
        <begin position="428"/>
        <end position="442"/>
    </location>
</feature>
<feature type="domain" description="Thioredoxin" evidence="2">
    <location>
        <begin position="429"/>
        <end position="553"/>
    </location>
</feature>
<feature type="region of interest" description="Disordered" evidence="3">
    <location>
        <begin position="1"/>
        <end position="37"/>
    </location>
</feature>
<feature type="region of interest" description="Disordered" evidence="3">
    <location>
        <begin position="77"/>
        <end position="442"/>
    </location>
</feature>
<feature type="region of interest" description="22 X 15 AA approximate tandem repeat of Q-P-K-X-G-D-I-P-K-S-[PS]-E-[KE]-X-I">
    <location>
        <begin position="113"/>
        <end position="442"/>
    </location>
</feature>
<feature type="compositionally biased region" description="Basic and acidic residues" evidence="3">
    <location>
        <begin position="99"/>
        <end position="143"/>
    </location>
</feature>
<feature type="compositionally biased region" description="Basic and acidic residues" evidence="3">
    <location>
        <begin position="173"/>
        <end position="209"/>
    </location>
</feature>
<feature type="compositionally biased region" description="Basic and acidic residues" evidence="3">
    <location>
        <begin position="233"/>
        <end position="254"/>
    </location>
</feature>
<feature type="compositionally biased region" description="Basic and acidic residues" evidence="3">
    <location>
        <begin position="278"/>
        <end position="376"/>
    </location>
</feature>
<feature type="compositionally biased region" description="Basic and acidic residues" evidence="3">
    <location>
        <begin position="385"/>
        <end position="439"/>
    </location>
</feature>
<feature type="modified residue" description="Phosphoserine" evidence="1">
    <location>
        <position position="362"/>
    </location>
</feature>
<feature type="modified residue" description="Phosphoserine" evidence="1">
    <location>
        <position position="392"/>
    </location>
</feature>
<feature type="disulfide bond" description="Redox-active" evidence="2">
    <location>
        <begin position="480"/>
        <end position="483"/>
    </location>
</feature>
<feature type="splice variant" id="VSP_014328" description="In isoform 2." evidence="9 10">
    <location>
        <begin position="1"/>
        <end position="67"/>
    </location>
</feature>
<feature type="splice variant" id="VSP_053684" description="In isoform 3." evidence="11">
    <location>
        <begin position="304"/>
        <end position="318"/>
    </location>
</feature>
<feature type="sequence variant" id="VAR_057351" description="In dbSNP:rs11662946.">
    <original>A</original>
    <variation>P</variation>
    <location>
        <position position="225"/>
    </location>
</feature>
<feature type="sequence variant" id="VAR_057352" description="In dbSNP:rs2240909.">
    <original>I</original>
    <variation>L</variation>
    <location>
        <position position="314"/>
    </location>
</feature>
<feature type="sequence variant" id="VAR_022762" description="In dbSNP:rs11081510." evidence="6 7 8">
    <original>E</original>
    <variation>K</variation>
    <location>
        <position position="341"/>
    </location>
</feature>
<feature type="sequence variant" id="VAR_022763" description="In dbSNP:rs2240906." evidence="6 7">
    <original>G</original>
    <variation>D</variation>
    <location>
        <position position="357"/>
    </location>
</feature>
<feature type="sequence variant" id="VAR_022764" description="In dbSNP:rs17732496." evidence="4">
    <original>A</original>
    <variation>T</variation>
    <location>
        <position position="461"/>
    </location>
</feature>
<feature type="sequence variant" id="VAR_022765" description="In dbSNP:rs17805544." evidence="6">
    <original>R</original>
    <variation>T</variation>
    <location>
        <position position="487"/>
    </location>
</feature>
<accession>Q86VQ3</accession>
<accession>A5YM73</accession>
<accession>Q8N7U4</accession>
<accession>Q96RX3</accession>
<accession>Q9H0L8</accession>